<feature type="chain" id="PRO_0000297904" description="Protein MON2 homolog">
    <location>
        <begin position="1"/>
        <end position="1721"/>
    </location>
</feature>
<feature type="region of interest" description="Disordered" evidence="2">
    <location>
        <begin position="414"/>
        <end position="439"/>
    </location>
</feature>
<feature type="region of interest" description="Disordered" evidence="2">
    <location>
        <begin position="516"/>
        <end position="539"/>
    </location>
</feature>
<feature type="compositionally biased region" description="Basic and acidic residues" evidence="2">
    <location>
        <begin position="516"/>
        <end position="526"/>
    </location>
</feature>
<keyword id="KW-0653">Protein transport</keyword>
<keyword id="KW-1185">Reference proteome</keyword>
<keyword id="KW-0813">Transport</keyword>
<accession>Q6GP04</accession>
<reference key="1">
    <citation type="submission" date="2004-06" db="EMBL/GenBank/DDBJ databases">
        <authorList>
            <consortium name="NIH - Xenopus Gene Collection (XGC) project"/>
        </authorList>
    </citation>
    <scope>NUCLEOTIDE SEQUENCE [LARGE SCALE MRNA]</scope>
    <source>
        <tissue>Spleen</tissue>
    </source>
</reference>
<protein>
    <recommendedName>
        <fullName>Protein MON2 homolog</fullName>
    </recommendedName>
</protein>
<sequence>MSSTSTTSSPEAIKKLLDNMQSDLRGLSMECKKKFPPVKEAAESGIVKVKNIAARSPDVLTALKENSSEVVQPFLMGCGTKEQKITQLCLAAIQRLMSHEVVSEGAAGNIINMLWQLMENGLEELKLLQTVLVLLTTNTVVHDESLSKAIVLCFRLHFTKDNITNNTAAATVRQVVTVVFERMVTEDERHKDAVEQPIPVTGNSNRRSVSTLKPCAKDAYMLFQDLCQLVNADAPYWLVGMTEMTRTFGLELLESVLNDFPQVFLQHQEFSFLLKERVCPLVIKLFSPNIKFRQGSNSNSSPAPVEKPYFPICMRLLRVVSVLIKQFYSLLVTECEIFLSLLVKFLDADKPQWLRAVAVESIHRLCVQPQLLRSFCQSYDMKQHSTKVFRDIVNALGSFIQSLFLIPSAGPASATTNPPGGSSSITPASNPTTSGMATATSNTTVLPAFEYRGTWIPILTISIQGSAKATYLEMLDKVEPPTIPEGYALSVAFHCLLDLVRGITTMIEGEIGQAETDSHISAEETPSHAPTINPQELPAVSDPADKGCRSVWEEMINACWCGLLAALSLLLDASTDETATENILKAEMTMASLCGKLGLVTPRDAFITAICKGSLPPHYALTVLNTSSAAICNKSYSIQGQNVQMISPSSDSHQQVVAVGQPLAVQPQGTVMLTAKNIQCMRTLLNLAHCHGGFLGTSWQLVLATLQHLVWILGLKPSSGGALKPGRAVEGPSTVLTTAVMTDLPIISNILSRLFESSQYLDDVSLHHLINALCSLSLEAMDMAYGNNKEPSLFAVAKLLETGLVNMHRIEILWRPLTGHLIEVCQHPNARMREWGAEALTSLIKAGLDFKHEPQLSENQRLQLLLLNPLKELSNIIHHDIRLKQLECVLQILQSQGDSLGPGWPLVLGVIGAIRNDQGESLIRNAFQCLQLVVTDFLPTMPSTCLQIVVEVAGSFGLQNQELNISLTSIGLLWNISDYFYQRGETIEKELNLEEDLLQKQAKEKGIILNRPFHPAPPFDCLWLCLYAKLGELCVDIRPAVRKSAGQTLFSTIGAHGTLLQHATWHTVIWKVLFQLLNQVRESSTTADKEKIESGGGNILIHHSRDTAEKQWAETWVLTLAGVARIFNTRRYLLQPLGEFTKAWDVLLDHIQSAALSKSNEVSLAALKSFQEILQIVSPTRDNDKPESLPGISAPVPVLIGPVNASGPGRPLVRSDSTGERLSRYSIPEQPIAVDEIEDSALWWAAWNTWYRIGTESTKPPISCDKLTFIPSQPFLTALIQIFPALYQHIKTAFSMDDLQKLGVILHGAVSVPISSDASPFILPSYTEAVLTSLQESVLTALDVLQKEICVGPENMQIMYPAIFDELSAFVQFSCKPPQYGKLETKHIANAKYNQIQLFAPAEWVALNYVPFAEKSLEVMVDLYQKTACHKAVVNEKVLQNVIKTLRVPLSLKYACPSESTWKLAVSSLLKVLSVGLPVARQHVSSGKFDSMWPELASTFEDFLFTKSTPPDNLSIEEFQRNEGIDVEVVQLISMEILPYANFIPKDFVGKIMTMLNKGSIHSQSSSFTEAEIDIRMREEFSKVCFETLLQFSFSNKVTTPQEGYISRMALSVLLKRSQDVLHRYIEDEKLSGKCPLPRQRVTEIIFVLKAVSTLIDSLKKTHPENVDANTWAQVISLYPTLVECITCSSSEVCTALKEALVPFKDFMHPPAAAKVQNGES</sequence>
<comment type="function">
    <text evidence="1">May be required for traffic between late Golgi and early endosomes.</text>
</comment>
<comment type="similarity">
    <text evidence="3">Belongs to the MON2 family.</text>
</comment>
<organism>
    <name type="scientific">Xenopus laevis</name>
    <name type="common">African clawed frog</name>
    <dbReference type="NCBI Taxonomy" id="8355"/>
    <lineage>
        <taxon>Eukaryota</taxon>
        <taxon>Metazoa</taxon>
        <taxon>Chordata</taxon>
        <taxon>Craniata</taxon>
        <taxon>Vertebrata</taxon>
        <taxon>Euteleostomi</taxon>
        <taxon>Amphibia</taxon>
        <taxon>Batrachia</taxon>
        <taxon>Anura</taxon>
        <taxon>Pipoidea</taxon>
        <taxon>Pipidae</taxon>
        <taxon>Xenopodinae</taxon>
        <taxon>Xenopus</taxon>
        <taxon>Xenopus</taxon>
    </lineage>
</organism>
<name>MON2_XENLA</name>
<gene>
    <name type="primary">mon2</name>
</gene>
<evidence type="ECO:0000250" key="1"/>
<evidence type="ECO:0000256" key="2">
    <source>
        <dbReference type="SAM" id="MobiDB-lite"/>
    </source>
</evidence>
<evidence type="ECO:0000305" key="3"/>
<proteinExistence type="evidence at transcript level"/>
<dbReference type="EMBL" id="BC073345">
    <property type="protein sequence ID" value="AAH73345.1"/>
    <property type="molecule type" value="mRNA"/>
</dbReference>
<dbReference type="RefSeq" id="NP_001085787.1">
    <property type="nucleotide sequence ID" value="NM_001092318.1"/>
</dbReference>
<dbReference type="SMR" id="Q6GP04"/>
<dbReference type="BioGRID" id="102377">
    <property type="interactions" value="1"/>
</dbReference>
<dbReference type="GeneID" id="444214"/>
<dbReference type="KEGG" id="xla:444214"/>
<dbReference type="AGR" id="Xenbase:XB-GENE-975879"/>
<dbReference type="CTD" id="444214"/>
<dbReference type="Xenbase" id="XB-GENE-975879">
    <property type="gene designation" value="mon2.L"/>
</dbReference>
<dbReference type="OrthoDB" id="294853at2759"/>
<dbReference type="Proteomes" id="UP000186698">
    <property type="component" value="Chromosome 3L"/>
</dbReference>
<dbReference type="Bgee" id="444214">
    <property type="expression patterns" value="Expressed in pancreas and 19 other cell types or tissues"/>
</dbReference>
<dbReference type="GO" id="GO:0015031">
    <property type="term" value="P:protein transport"/>
    <property type="evidence" value="ECO:0007669"/>
    <property type="project" value="UniProtKB-KW"/>
</dbReference>
<dbReference type="InterPro" id="IPR016024">
    <property type="entry name" value="ARM-type_fold"/>
</dbReference>
<dbReference type="InterPro" id="IPR032629">
    <property type="entry name" value="DCB_dom"/>
</dbReference>
<dbReference type="InterPro" id="IPR015403">
    <property type="entry name" value="Mon2/Sec7/BIG1-like_HDS"/>
</dbReference>
<dbReference type="InterPro" id="IPR032691">
    <property type="entry name" value="Mon2/Sec7/BIG1-like_HUS"/>
</dbReference>
<dbReference type="InterPro" id="IPR032817">
    <property type="entry name" value="Mon2_C"/>
</dbReference>
<dbReference type="PANTHER" id="PTHR10663">
    <property type="entry name" value="GUANYL-NUCLEOTIDE EXCHANGE FACTOR"/>
    <property type="match status" value="1"/>
</dbReference>
<dbReference type="PANTHER" id="PTHR10663:SF333">
    <property type="entry name" value="PROTEIN MON2 HOMOLOG"/>
    <property type="match status" value="1"/>
</dbReference>
<dbReference type="Pfam" id="PF16213">
    <property type="entry name" value="DCB"/>
    <property type="match status" value="1"/>
</dbReference>
<dbReference type="Pfam" id="PF16206">
    <property type="entry name" value="Mon2_C"/>
    <property type="match status" value="1"/>
</dbReference>
<dbReference type="Pfam" id="PF09324">
    <property type="entry name" value="Sec7-like_HDS"/>
    <property type="match status" value="1"/>
</dbReference>
<dbReference type="Pfam" id="PF12783">
    <property type="entry name" value="Sec7-like_HUS"/>
    <property type="match status" value="1"/>
</dbReference>
<dbReference type="SUPFAM" id="SSF48371">
    <property type="entry name" value="ARM repeat"/>
    <property type="match status" value="2"/>
</dbReference>